<evidence type="ECO:0000255" key="1">
    <source>
        <dbReference type="HAMAP-Rule" id="MF_01159"/>
    </source>
</evidence>
<reference key="1">
    <citation type="journal article" date="2009" name="PLoS Pathog.">
        <title>Genomic evidence for the evolution of Streptococcus equi: host restriction, increased virulence, and genetic exchange with human pathogens.</title>
        <authorList>
            <person name="Holden M.T.G."/>
            <person name="Heather Z."/>
            <person name="Paillot R."/>
            <person name="Steward K.F."/>
            <person name="Webb K."/>
            <person name="Ainslie F."/>
            <person name="Jourdan T."/>
            <person name="Bason N.C."/>
            <person name="Holroyd N.E."/>
            <person name="Mungall K."/>
            <person name="Quail M.A."/>
            <person name="Sanders M."/>
            <person name="Simmonds M."/>
            <person name="Willey D."/>
            <person name="Brooks K."/>
            <person name="Aanensen D.M."/>
            <person name="Spratt B.G."/>
            <person name="Jolley K.A."/>
            <person name="Maiden M.C.J."/>
            <person name="Kehoe M."/>
            <person name="Chanter N."/>
            <person name="Bentley S.D."/>
            <person name="Robinson C."/>
            <person name="Maskell D.J."/>
            <person name="Parkhill J."/>
            <person name="Waller A.S."/>
        </authorList>
    </citation>
    <scope>NUCLEOTIDE SEQUENCE [LARGE SCALE GENOMIC DNA]</scope>
    <source>
        <strain>H70</strain>
    </source>
</reference>
<gene>
    <name evidence="1" type="primary">yabA</name>
    <name type="ordered locus">SZO_03640</name>
</gene>
<organism>
    <name type="scientific">Streptococcus equi subsp. zooepidemicus (strain H70)</name>
    <dbReference type="NCBI Taxonomy" id="553483"/>
    <lineage>
        <taxon>Bacteria</taxon>
        <taxon>Bacillati</taxon>
        <taxon>Bacillota</taxon>
        <taxon>Bacilli</taxon>
        <taxon>Lactobacillales</taxon>
        <taxon>Streptococcaceae</taxon>
        <taxon>Streptococcus</taxon>
    </lineage>
</organism>
<accession>C0MGU1</accession>
<name>YABA_STRS7</name>
<sequence>MNKKELFDAFDGFSQNLMVTLADIEAMKKQVQGLVEENTILRLENTKLRERLSQLEHENLAKTSSKQGKDHLEGIYDEGFHICNFFYGQRRENDEECMFCRELLDRK</sequence>
<proteinExistence type="inferred from homology"/>
<comment type="function">
    <text evidence="1">Involved in control of chromosome replication initiation. Inhibits the cooperative binding of DnaA to the oriC region, thus negatively regulating initiation of chromosome replication. Inhibits the ability of DnaA-ATP to form a helix on DNA; does not disassemble preformed DnaA-DNA helices. Decreases the residence time of DnaA on the chromosome at its binding sites (oriC, replication forks and promoter-binding sites). Tethers DnaA to the replication machinery via the DNA polymerase beta sliding clamp subunit (dnaN). Associates with oriC and other DnaA targets on the chromosome in a DnaA-dependent manner.</text>
</comment>
<comment type="cofactor">
    <cofactor evidence="1">
        <name>Zn(2+)</name>
        <dbReference type="ChEBI" id="CHEBI:29105"/>
    </cofactor>
    <text evidence="1">Binds 1 zinc ion per subunit.</text>
</comment>
<comment type="subunit">
    <text evidence="1">Homotetramer. Interacts with both DnaA and DnaN, acting as a bridge between these two proteins.</text>
</comment>
<comment type="subcellular location">
    <subcellularLocation>
        <location evidence="1">Cytoplasm</location>
        <location evidence="1">Nucleoid</location>
    </subcellularLocation>
    <text evidence="1">Localizes in tight foci, which correspond to the replisome at mid-cell throughout the cell cycle.</text>
</comment>
<comment type="similarity">
    <text evidence="1">Belongs to the YabA family.</text>
</comment>
<feature type="chain" id="PRO_1000213702" description="Replication initiation control protein YabA">
    <location>
        <begin position="1"/>
        <end position="107"/>
    </location>
</feature>
<feature type="binding site" evidence="1">
    <location>
        <position position="81"/>
    </location>
    <ligand>
        <name>Zn(2+)</name>
        <dbReference type="ChEBI" id="CHEBI:29105"/>
    </ligand>
</feature>
<feature type="binding site" evidence="1">
    <location>
        <position position="83"/>
    </location>
    <ligand>
        <name>Zn(2+)</name>
        <dbReference type="ChEBI" id="CHEBI:29105"/>
    </ligand>
</feature>
<feature type="binding site" evidence="1">
    <location>
        <position position="97"/>
    </location>
    <ligand>
        <name>Zn(2+)</name>
        <dbReference type="ChEBI" id="CHEBI:29105"/>
    </ligand>
</feature>
<feature type="binding site" evidence="1">
    <location>
        <position position="100"/>
    </location>
    <ligand>
        <name>Zn(2+)</name>
        <dbReference type="ChEBI" id="CHEBI:29105"/>
    </ligand>
</feature>
<keyword id="KW-0963">Cytoplasm</keyword>
<keyword id="KW-0235">DNA replication</keyword>
<keyword id="KW-0236">DNA replication inhibitor</keyword>
<keyword id="KW-0479">Metal-binding</keyword>
<keyword id="KW-0862">Zinc</keyword>
<dbReference type="EMBL" id="FM204884">
    <property type="protein sequence ID" value="CAW98215.1"/>
    <property type="molecule type" value="Genomic_DNA"/>
</dbReference>
<dbReference type="SMR" id="C0MGU1"/>
<dbReference type="KEGG" id="seq:SZO_03640"/>
<dbReference type="eggNOG" id="COG4467">
    <property type="taxonomic scope" value="Bacteria"/>
</dbReference>
<dbReference type="HOGENOM" id="CLU_157169_0_0_9"/>
<dbReference type="Proteomes" id="UP000001368">
    <property type="component" value="Chromosome"/>
</dbReference>
<dbReference type="GO" id="GO:0009295">
    <property type="term" value="C:nucleoid"/>
    <property type="evidence" value="ECO:0007669"/>
    <property type="project" value="UniProtKB-SubCell"/>
</dbReference>
<dbReference type="GO" id="GO:0006260">
    <property type="term" value="P:DNA replication"/>
    <property type="evidence" value="ECO:0007669"/>
    <property type="project" value="UniProtKB-UniRule"/>
</dbReference>
<dbReference type="HAMAP" id="MF_01159">
    <property type="entry name" value="YabA"/>
    <property type="match status" value="1"/>
</dbReference>
<dbReference type="InterPro" id="IPR010377">
    <property type="entry name" value="YabA"/>
</dbReference>
<dbReference type="NCBIfam" id="NF009640">
    <property type="entry name" value="PRK13169.1-1"/>
    <property type="match status" value="1"/>
</dbReference>
<dbReference type="Pfam" id="PF06156">
    <property type="entry name" value="YabA"/>
    <property type="match status" value="1"/>
</dbReference>
<dbReference type="PIRSF" id="PIRSF021439">
    <property type="entry name" value="DUF972"/>
    <property type="match status" value="1"/>
</dbReference>
<protein>
    <recommendedName>
        <fullName evidence="1">Replication initiation control protein YabA</fullName>
    </recommendedName>
</protein>